<feature type="chain" id="PRO_0000296488" description="Large ribosomal subunit protein bL32">
    <location>
        <begin position="1"/>
        <end position="57"/>
    </location>
</feature>
<feature type="region of interest" description="Disordered" evidence="2">
    <location>
        <begin position="1"/>
        <end position="23"/>
    </location>
</feature>
<feature type="compositionally biased region" description="Basic residues" evidence="2">
    <location>
        <begin position="9"/>
        <end position="20"/>
    </location>
</feature>
<name>RL32_LACLM</name>
<protein>
    <recommendedName>
        <fullName evidence="1">Large ribosomal subunit protein bL32</fullName>
    </recommendedName>
    <alternativeName>
        <fullName evidence="3">50S ribosomal protein L32</fullName>
    </alternativeName>
</protein>
<keyword id="KW-0002">3D-structure</keyword>
<keyword id="KW-0687">Ribonucleoprotein</keyword>
<keyword id="KW-0689">Ribosomal protein</keyword>
<gene>
    <name evidence="1" type="primary">rpmF</name>
    <name type="ordered locus">llmg_0099</name>
</gene>
<reference key="1">
    <citation type="journal article" date="2007" name="J. Bacteriol.">
        <title>The complete genome sequence of the lactic acid bacterial paradigm Lactococcus lactis subsp. cremoris MG1363.</title>
        <authorList>
            <person name="Wegmann U."/>
            <person name="O'Connell-Motherway M."/>
            <person name="Zomer A."/>
            <person name="Buist G."/>
            <person name="Shearman C."/>
            <person name="Canchaya C."/>
            <person name="Ventura M."/>
            <person name="Goesmann A."/>
            <person name="Gasson M.J."/>
            <person name="Kuipers O.P."/>
            <person name="van Sinderen D."/>
            <person name="Kok J."/>
        </authorList>
    </citation>
    <scope>NUCLEOTIDE SEQUENCE [LARGE SCALE GENOMIC DNA]</scope>
    <source>
        <strain>MG1363</strain>
    </source>
</reference>
<evidence type="ECO:0000255" key="1">
    <source>
        <dbReference type="HAMAP-Rule" id="MF_00340"/>
    </source>
</evidence>
<evidence type="ECO:0000256" key="2">
    <source>
        <dbReference type="SAM" id="MobiDB-lite"/>
    </source>
</evidence>
<evidence type="ECO:0000305" key="3"/>
<organism>
    <name type="scientific">Lactococcus lactis subsp. cremoris (strain MG1363)</name>
    <dbReference type="NCBI Taxonomy" id="416870"/>
    <lineage>
        <taxon>Bacteria</taxon>
        <taxon>Bacillati</taxon>
        <taxon>Bacillota</taxon>
        <taxon>Bacilli</taxon>
        <taxon>Lactobacillales</taxon>
        <taxon>Streptococcaceae</taxon>
        <taxon>Lactococcus</taxon>
        <taxon>Lactococcus cremoris subsp. cremoris</taxon>
    </lineage>
</organism>
<comment type="similarity">
    <text evidence="1">Belongs to the bacterial ribosomal protein bL32 family.</text>
</comment>
<dbReference type="EMBL" id="AM406671">
    <property type="protein sequence ID" value="CAL96706.1"/>
    <property type="molecule type" value="Genomic_DNA"/>
</dbReference>
<dbReference type="RefSeq" id="WP_010905107.1">
    <property type="nucleotide sequence ID" value="NZ_WJVF01000026.1"/>
</dbReference>
<dbReference type="PDB" id="5MYJ">
    <property type="method" value="EM"/>
    <property type="resolution" value="5.60 A"/>
    <property type="chains" value="B4=1-57"/>
</dbReference>
<dbReference type="PDBsum" id="5MYJ"/>
<dbReference type="EMDB" id="EMD-3581"/>
<dbReference type="SMR" id="A2RHH0"/>
<dbReference type="STRING" id="416870.llmg_0099"/>
<dbReference type="GeneID" id="89632239"/>
<dbReference type="KEGG" id="llm:llmg_0099"/>
<dbReference type="eggNOG" id="COG0333">
    <property type="taxonomic scope" value="Bacteria"/>
</dbReference>
<dbReference type="HOGENOM" id="CLU_129084_2_1_9"/>
<dbReference type="OrthoDB" id="9812874at2"/>
<dbReference type="PhylomeDB" id="A2RHH0"/>
<dbReference type="Proteomes" id="UP000000364">
    <property type="component" value="Chromosome"/>
</dbReference>
<dbReference type="GO" id="GO:0015934">
    <property type="term" value="C:large ribosomal subunit"/>
    <property type="evidence" value="ECO:0007669"/>
    <property type="project" value="InterPro"/>
</dbReference>
<dbReference type="GO" id="GO:0003735">
    <property type="term" value="F:structural constituent of ribosome"/>
    <property type="evidence" value="ECO:0007669"/>
    <property type="project" value="InterPro"/>
</dbReference>
<dbReference type="GO" id="GO:0006412">
    <property type="term" value="P:translation"/>
    <property type="evidence" value="ECO:0007669"/>
    <property type="project" value="UniProtKB-UniRule"/>
</dbReference>
<dbReference type="HAMAP" id="MF_00340">
    <property type="entry name" value="Ribosomal_bL32"/>
    <property type="match status" value="1"/>
</dbReference>
<dbReference type="InterPro" id="IPR002677">
    <property type="entry name" value="Ribosomal_bL32"/>
</dbReference>
<dbReference type="InterPro" id="IPR044957">
    <property type="entry name" value="Ribosomal_bL32_bact"/>
</dbReference>
<dbReference type="InterPro" id="IPR011332">
    <property type="entry name" value="Ribosomal_zn-bd"/>
</dbReference>
<dbReference type="NCBIfam" id="TIGR01031">
    <property type="entry name" value="rpmF_bact"/>
    <property type="match status" value="1"/>
</dbReference>
<dbReference type="PANTHER" id="PTHR35534">
    <property type="entry name" value="50S RIBOSOMAL PROTEIN L32"/>
    <property type="match status" value="1"/>
</dbReference>
<dbReference type="PANTHER" id="PTHR35534:SF1">
    <property type="entry name" value="LARGE RIBOSOMAL SUBUNIT PROTEIN BL32"/>
    <property type="match status" value="1"/>
</dbReference>
<dbReference type="Pfam" id="PF01783">
    <property type="entry name" value="Ribosomal_L32p"/>
    <property type="match status" value="1"/>
</dbReference>
<dbReference type="SUPFAM" id="SSF57829">
    <property type="entry name" value="Zn-binding ribosomal proteins"/>
    <property type="match status" value="1"/>
</dbReference>
<accession>A2RHH0</accession>
<sequence>MAVPARHTSSAKKNRRRTHYKLTAPTVTFDETTGDYRHSHRVSLKGYYKGRKVRDTK</sequence>
<proteinExistence type="evidence at protein level"/>